<dbReference type="EMBL" id="CP001173">
    <property type="protein sequence ID" value="ACI27878.1"/>
    <property type="molecule type" value="Genomic_DNA"/>
</dbReference>
<dbReference type="RefSeq" id="WP_000973583.1">
    <property type="nucleotide sequence ID" value="NC_011333.1"/>
</dbReference>
<dbReference type="SMR" id="B5Z8H9"/>
<dbReference type="KEGG" id="hpg:HPG27_1128"/>
<dbReference type="HOGENOM" id="CLU_001265_61_1_7"/>
<dbReference type="Proteomes" id="UP000001735">
    <property type="component" value="Chromosome"/>
</dbReference>
<dbReference type="GO" id="GO:0005886">
    <property type="term" value="C:plasma membrane"/>
    <property type="evidence" value="ECO:0007669"/>
    <property type="project" value="UniProtKB-SubCell"/>
</dbReference>
<dbReference type="GO" id="GO:0015144">
    <property type="term" value="F:carbohydrate transmembrane transporter activity"/>
    <property type="evidence" value="ECO:0007669"/>
    <property type="project" value="UniProtKB-UniRule"/>
</dbReference>
<dbReference type="CDD" id="cd17324">
    <property type="entry name" value="MFS_NepI_like"/>
    <property type="match status" value="1"/>
</dbReference>
<dbReference type="Gene3D" id="1.20.1250.20">
    <property type="entry name" value="MFS general substrate transporter like domains"/>
    <property type="match status" value="1"/>
</dbReference>
<dbReference type="HAMAP" id="MF_00517">
    <property type="entry name" value="MFS_SotB"/>
    <property type="match status" value="1"/>
</dbReference>
<dbReference type="InterPro" id="IPR011701">
    <property type="entry name" value="MFS"/>
</dbReference>
<dbReference type="InterPro" id="IPR020846">
    <property type="entry name" value="MFS_dom"/>
</dbReference>
<dbReference type="InterPro" id="IPR050189">
    <property type="entry name" value="MFS_Efflux_Transporters"/>
</dbReference>
<dbReference type="InterPro" id="IPR036259">
    <property type="entry name" value="MFS_trans_sf"/>
</dbReference>
<dbReference type="InterPro" id="IPR023495">
    <property type="entry name" value="Sugar_effux_transptr_put"/>
</dbReference>
<dbReference type="NCBIfam" id="NF002921">
    <property type="entry name" value="PRK03545.1"/>
    <property type="match status" value="1"/>
</dbReference>
<dbReference type="PANTHER" id="PTHR43124">
    <property type="entry name" value="PURINE EFFLUX PUMP PBUE"/>
    <property type="match status" value="1"/>
</dbReference>
<dbReference type="PANTHER" id="PTHR43124:SF4">
    <property type="entry name" value="SUGAR EFFLUX TRANSPORTER"/>
    <property type="match status" value="1"/>
</dbReference>
<dbReference type="Pfam" id="PF07690">
    <property type="entry name" value="MFS_1"/>
    <property type="match status" value="1"/>
</dbReference>
<dbReference type="SUPFAM" id="SSF103473">
    <property type="entry name" value="MFS general substrate transporter"/>
    <property type="match status" value="1"/>
</dbReference>
<dbReference type="PROSITE" id="PS50850">
    <property type="entry name" value="MFS"/>
    <property type="match status" value="1"/>
</dbReference>
<reference key="1">
    <citation type="journal article" date="2009" name="J. Bacteriol.">
        <title>The complete genome sequence of Helicobacter pylori strain G27.</title>
        <authorList>
            <person name="Baltrus D.A."/>
            <person name="Amieva M.R."/>
            <person name="Covacci A."/>
            <person name="Lowe T.M."/>
            <person name="Merrell D.S."/>
            <person name="Ottemann K.M."/>
            <person name="Stein M."/>
            <person name="Salama N.R."/>
            <person name="Guillemin K."/>
        </authorList>
    </citation>
    <scope>NUCLEOTIDE SEQUENCE [LARGE SCALE GENOMIC DNA]</scope>
    <source>
        <strain>G27</strain>
    </source>
</reference>
<accession>B5Z8H9</accession>
<comment type="function">
    <text evidence="1">Involved in the efflux of sugars. The physiological role may be the reduction of the intracellular concentration of toxic sugars or sugar metabolites.</text>
</comment>
<comment type="subcellular location">
    <subcellularLocation>
        <location evidence="1">Cell inner membrane</location>
        <topology evidence="1">Multi-pass membrane protein</topology>
    </subcellularLocation>
</comment>
<comment type="similarity">
    <text evidence="1">Belongs to the major facilitator superfamily. SotB (TC 2.A.1.2) family.</text>
</comment>
<keyword id="KW-0997">Cell inner membrane</keyword>
<keyword id="KW-1003">Cell membrane</keyword>
<keyword id="KW-0472">Membrane</keyword>
<keyword id="KW-1185">Reference proteome</keyword>
<keyword id="KW-0762">Sugar transport</keyword>
<keyword id="KW-0812">Transmembrane</keyword>
<keyword id="KW-1133">Transmembrane helix</keyword>
<keyword id="KW-0813">Transport</keyword>
<sequence>MMITKQSYQKFALMRVFVFSLSAFIFNTTEFVPVALLSDIAKSFEMESATVGLMITAYAWVVSLGSLPLMLLSAKIERKRLLLFLFALFIASHILSALAWNFWVLLISRIGIAFAHSIFWSITASLVIRVAPRNKKQQALGLLALGSSLAMILGLPLGRIIGQMLDWRSTFGVIGGVATLIALLMWKLLPPLPSRNAGTLASVPILMKRPLLMGIYLLVIMVISGHFTTYSYIEPFIIQISQFSPDITTLMLFVFGLAGVAGSFLFGRLYAKNSRKFIAFAMILVICPQLLLFVFKNLEWVIFLQIFLWGIGITSLTIALQMRVLQLAPDATDVASAIFSGSYNVGIGSGALFGSIVIHQLGLGYIGFVGGALGLLALFWLRFITIKFKKT</sequence>
<protein>
    <recommendedName>
        <fullName evidence="1">Probable sugar efflux transporter</fullName>
    </recommendedName>
</protein>
<proteinExistence type="inferred from homology"/>
<gene>
    <name evidence="1" type="primary">sotB</name>
    <name type="ordered locus">HPG27_1128</name>
</gene>
<organism>
    <name type="scientific">Helicobacter pylori (strain G27)</name>
    <dbReference type="NCBI Taxonomy" id="563041"/>
    <lineage>
        <taxon>Bacteria</taxon>
        <taxon>Pseudomonadati</taxon>
        <taxon>Campylobacterota</taxon>
        <taxon>Epsilonproteobacteria</taxon>
        <taxon>Campylobacterales</taxon>
        <taxon>Helicobacteraceae</taxon>
        <taxon>Helicobacter</taxon>
    </lineage>
</organism>
<feature type="chain" id="PRO_1000127465" description="Probable sugar efflux transporter">
    <location>
        <begin position="1"/>
        <end position="391"/>
    </location>
</feature>
<feature type="transmembrane region" description="Helical" evidence="1">
    <location>
        <begin position="16"/>
        <end position="36"/>
    </location>
</feature>
<feature type="transmembrane region" description="Helical" evidence="1">
    <location>
        <begin position="51"/>
        <end position="71"/>
    </location>
</feature>
<feature type="transmembrane region" description="Helical" evidence="1">
    <location>
        <begin position="82"/>
        <end position="102"/>
    </location>
</feature>
<feature type="transmembrane region" description="Helical" evidence="1">
    <location>
        <begin position="103"/>
        <end position="123"/>
    </location>
</feature>
<feature type="transmembrane region" description="Helical" evidence="1">
    <location>
        <begin position="138"/>
        <end position="158"/>
    </location>
</feature>
<feature type="transmembrane region" description="Helical" evidence="1">
    <location>
        <begin position="171"/>
        <end position="191"/>
    </location>
</feature>
<feature type="transmembrane region" description="Helical" evidence="1">
    <location>
        <begin position="210"/>
        <end position="230"/>
    </location>
</feature>
<feature type="transmembrane region" description="Helical" evidence="1">
    <location>
        <begin position="247"/>
        <end position="267"/>
    </location>
</feature>
<feature type="transmembrane region" description="Helical" evidence="1">
    <location>
        <begin position="277"/>
        <end position="297"/>
    </location>
</feature>
<feature type="transmembrane region" description="Helical" evidence="1">
    <location>
        <begin position="300"/>
        <end position="320"/>
    </location>
</feature>
<feature type="transmembrane region" description="Helical" evidence="1">
    <location>
        <begin position="338"/>
        <end position="358"/>
    </location>
</feature>
<feature type="transmembrane region" description="Helical" evidence="1">
    <location>
        <begin position="361"/>
        <end position="381"/>
    </location>
</feature>
<name>SOTB_HELPG</name>
<evidence type="ECO:0000255" key="1">
    <source>
        <dbReference type="HAMAP-Rule" id="MF_00517"/>
    </source>
</evidence>